<proteinExistence type="inferred from homology"/>
<comment type="function">
    <text evidence="1">Role in growth on acetoin or butanediol. Involved in the breakdown of these compounds used as a carbon source (By similarity).</text>
</comment>
<comment type="pathway">
    <text>Ketone degradation; acetoin degradation.</text>
</comment>
<comment type="similarity">
    <text evidence="2">Belongs to the histone deacetylase family.</text>
</comment>
<gene>
    <name type="primary">acuC</name>
    <name type="ordered locus">SAS1661</name>
</gene>
<name>ACUC_STAAS</name>
<protein>
    <recommendedName>
        <fullName>Acetoin utilization protein AcuC</fullName>
    </recommendedName>
</protein>
<sequence length="389" mass="44659">MQQHSSKTAYVYSDKLLQYRFHDQHPFNQMRLKLTTELLLNANLLSPEQIVQPRIATDDELMLIHKYDYVEAIKHASHGIISEDEAKKYGLNDEENSQFKHMHRHSATIVGGALTLADLIMSGKVLNGCHLGGGLHHAQPGRASGFCIYNDIAITAQYLAKEYNQRVLIIDTDAHHGDGTQWSFYADNHVTTYSIHETGKFLFPGSGHYTERGEDIGYGHTVNVPLEPYTEDASFLECFKLTVEPVVKSFKPDIILSVNGVDIHYRDPLTHLNCTLHSLYEIPYFVKYLADSYTNGKVIMFGGGGYNIWRVVPRAWSHVFLSLIDQPIQSGYLPLEWINKWKHYSSELLPKRWEDRLNDYTYVPRTKEISEKNKKLALHIASWYESTRQ</sequence>
<evidence type="ECO:0000250" key="1"/>
<evidence type="ECO:0000305" key="2"/>
<accession>Q6G8J2</accession>
<organism>
    <name type="scientific">Staphylococcus aureus (strain MSSA476)</name>
    <dbReference type="NCBI Taxonomy" id="282459"/>
    <lineage>
        <taxon>Bacteria</taxon>
        <taxon>Bacillati</taxon>
        <taxon>Bacillota</taxon>
        <taxon>Bacilli</taxon>
        <taxon>Bacillales</taxon>
        <taxon>Staphylococcaceae</taxon>
        <taxon>Staphylococcus</taxon>
    </lineage>
</organism>
<keyword id="KW-0006">Acetoin catabolism</keyword>
<dbReference type="EMBL" id="BX571857">
    <property type="protein sequence ID" value="CAG43464.1"/>
    <property type="molecule type" value="Genomic_DNA"/>
</dbReference>
<dbReference type="RefSeq" id="WP_001184010.1">
    <property type="nucleotide sequence ID" value="NC_002953.3"/>
</dbReference>
<dbReference type="SMR" id="Q6G8J2"/>
<dbReference type="KEGG" id="sas:SAS1661"/>
<dbReference type="HOGENOM" id="CLU_007727_8_0_9"/>
<dbReference type="UniPathway" id="UPA00040"/>
<dbReference type="GO" id="GO:0004407">
    <property type="term" value="F:histone deacetylase activity"/>
    <property type="evidence" value="ECO:0007669"/>
    <property type="project" value="TreeGrafter"/>
</dbReference>
<dbReference type="GO" id="GO:0045150">
    <property type="term" value="P:acetoin catabolic process"/>
    <property type="evidence" value="ECO:0007669"/>
    <property type="project" value="UniProtKB-UniPathway"/>
</dbReference>
<dbReference type="GO" id="GO:0040029">
    <property type="term" value="P:epigenetic regulation of gene expression"/>
    <property type="evidence" value="ECO:0007669"/>
    <property type="project" value="TreeGrafter"/>
</dbReference>
<dbReference type="CDD" id="cd09994">
    <property type="entry name" value="HDAC_AcuC_like"/>
    <property type="match status" value="1"/>
</dbReference>
<dbReference type="Gene3D" id="3.40.800.20">
    <property type="entry name" value="Histone deacetylase domain"/>
    <property type="match status" value="1"/>
</dbReference>
<dbReference type="InterPro" id="IPR003085">
    <property type="entry name" value="AcuC"/>
</dbReference>
<dbReference type="InterPro" id="IPR050284">
    <property type="entry name" value="HDAC_PDAC"/>
</dbReference>
<dbReference type="InterPro" id="IPR000286">
    <property type="entry name" value="His_deacetylse"/>
</dbReference>
<dbReference type="InterPro" id="IPR023801">
    <property type="entry name" value="His_deacetylse_dom"/>
</dbReference>
<dbReference type="InterPro" id="IPR037138">
    <property type="entry name" value="His_deacetylse_dom_sf"/>
</dbReference>
<dbReference type="InterPro" id="IPR023696">
    <property type="entry name" value="Ureohydrolase_dom_sf"/>
</dbReference>
<dbReference type="PANTHER" id="PTHR10625:SF10">
    <property type="entry name" value="HISTONE DEACETYLASE HDAC1"/>
    <property type="match status" value="1"/>
</dbReference>
<dbReference type="PANTHER" id="PTHR10625">
    <property type="entry name" value="HISTONE DEACETYLASE HDAC1-RELATED"/>
    <property type="match status" value="1"/>
</dbReference>
<dbReference type="Pfam" id="PF00850">
    <property type="entry name" value="Hist_deacetyl"/>
    <property type="match status" value="1"/>
</dbReference>
<dbReference type="PRINTS" id="PR01272">
    <property type="entry name" value="ACUCPROTEIN"/>
</dbReference>
<dbReference type="PRINTS" id="PR01270">
    <property type="entry name" value="HDASUPER"/>
</dbReference>
<dbReference type="SUPFAM" id="SSF52768">
    <property type="entry name" value="Arginase/deacetylase"/>
    <property type="match status" value="1"/>
</dbReference>
<reference key="1">
    <citation type="journal article" date="2004" name="Proc. Natl. Acad. Sci. U.S.A.">
        <title>Complete genomes of two clinical Staphylococcus aureus strains: evidence for the rapid evolution of virulence and drug resistance.</title>
        <authorList>
            <person name="Holden M.T.G."/>
            <person name="Feil E.J."/>
            <person name="Lindsay J.A."/>
            <person name="Peacock S.J."/>
            <person name="Day N.P.J."/>
            <person name="Enright M.C."/>
            <person name="Foster T.J."/>
            <person name="Moore C.E."/>
            <person name="Hurst L."/>
            <person name="Atkin R."/>
            <person name="Barron A."/>
            <person name="Bason N."/>
            <person name="Bentley S.D."/>
            <person name="Chillingworth C."/>
            <person name="Chillingworth T."/>
            <person name="Churcher C."/>
            <person name="Clark L."/>
            <person name="Corton C."/>
            <person name="Cronin A."/>
            <person name="Doggett J."/>
            <person name="Dowd L."/>
            <person name="Feltwell T."/>
            <person name="Hance Z."/>
            <person name="Harris B."/>
            <person name="Hauser H."/>
            <person name="Holroyd S."/>
            <person name="Jagels K."/>
            <person name="James K.D."/>
            <person name="Lennard N."/>
            <person name="Line A."/>
            <person name="Mayes R."/>
            <person name="Moule S."/>
            <person name="Mungall K."/>
            <person name="Ormond D."/>
            <person name="Quail M.A."/>
            <person name="Rabbinowitsch E."/>
            <person name="Rutherford K.M."/>
            <person name="Sanders M."/>
            <person name="Sharp S."/>
            <person name="Simmonds M."/>
            <person name="Stevens K."/>
            <person name="Whitehead S."/>
            <person name="Barrell B.G."/>
            <person name="Spratt B.G."/>
            <person name="Parkhill J."/>
        </authorList>
    </citation>
    <scope>NUCLEOTIDE SEQUENCE [LARGE SCALE GENOMIC DNA]</scope>
    <source>
        <strain>MSSA476</strain>
    </source>
</reference>
<feature type="chain" id="PRO_0000114734" description="Acetoin utilization protein AcuC">
    <location>
        <begin position="1"/>
        <end position="389"/>
    </location>
</feature>